<accession>P27970</accession>
<protein>
    <recommendedName>
        <fullName>Protein Nef</fullName>
    </recommendedName>
    <alternativeName>
        <fullName>3'ORF</fullName>
    </alternativeName>
    <alternativeName>
        <fullName>Negative factor</fullName>
        <shortName>F-protein</shortName>
    </alternativeName>
</protein>
<organismHost>
    <name type="scientific">Cercopithecidae</name>
    <name type="common">Old World monkeys</name>
    <dbReference type="NCBI Taxonomy" id="9527"/>
</organismHost>
<sequence>MGLGSSKPQHKKQLTIWRALHATRHTRYGLLADPLIGQSSTLQEECDKGLRKSLIRKRNGNMTPEGRRLQDGDQWDEWSDEEDEVGFPVRPRVPLRQITYKLAVDFSHFLKEKGGLDGIYYSDRRNKILNLYALNEWGIIDDWNAWSKGPGIRYPRCFGFCFKLVPVALHEEAETCERHCLVHPAQLHEDPDGINHGEILAWKFDPMLAVQYDPSREYFTDLYSTVGTGN</sequence>
<feature type="initiator methionine" description="Removed; by host" evidence="1">
    <location>
        <position position="1"/>
    </location>
</feature>
<feature type="chain" id="PRO_0000085239" description="Protein Nef">
    <location>
        <begin position="2"/>
        <end position="230"/>
    </location>
</feature>
<feature type="region of interest" description="Acidic">
    <location>
        <begin position="76"/>
        <end position="84"/>
    </location>
</feature>
<feature type="region of interest" description="Mediates dimerization" evidence="1">
    <location>
        <begin position="127"/>
        <end position="143"/>
    </location>
</feature>
<feature type="lipid moiety-binding region" description="N-myristoyl glycine; by host" evidence="1">
    <location>
        <position position="2"/>
    </location>
</feature>
<keyword id="KW-1032">Host cell membrane</keyword>
<keyword id="KW-1043">Host membrane</keyword>
<keyword id="KW-0945">Host-virus interaction</keyword>
<keyword id="KW-0449">Lipoprotein</keyword>
<keyword id="KW-0472">Membrane</keyword>
<keyword id="KW-0519">Myristate</keyword>
<keyword id="KW-0899">Viral immunoevasion</keyword>
<keyword id="KW-0843">Virulence</keyword>
<proteinExistence type="inferred from homology"/>
<dbReference type="EMBL" id="M29975">
    <property type="protein sequence ID" value="AAA91912.1"/>
    <property type="molecule type" value="Genomic_RNA"/>
</dbReference>
<dbReference type="SMR" id="P27970"/>
<dbReference type="Proteomes" id="UP000258159">
    <property type="component" value="Segment"/>
</dbReference>
<dbReference type="GO" id="GO:0020002">
    <property type="term" value="C:host cell plasma membrane"/>
    <property type="evidence" value="ECO:0007669"/>
    <property type="project" value="UniProtKB-SubCell"/>
</dbReference>
<dbReference type="GO" id="GO:0016020">
    <property type="term" value="C:membrane"/>
    <property type="evidence" value="ECO:0007669"/>
    <property type="project" value="UniProtKB-KW"/>
</dbReference>
<dbReference type="GO" id="GO:0005525">
    <property type="term" value="F:GTP binding"/>
    <property type="evidence" value="ECO:0007669"/>
    <property type="project" value="InterPro"/>
</dbReference>
<dbReference type="Gene3D" id="3.30.62.10">
    <property type="entry name" value="Nef Regulatory Factor"/>
    <property type="match status" value="1"/>
</dbReference>
<dbReference type="InterPro" id="IPR027481">
    <property type="entry name" value="HIV-1_Nef_core_sf"/>
</dbReference>
<dbReference type="InterPro" id="IPR001558">
    <property type="entry name" value="HIV_Nef"/>
</dbReference>
<dbReference type="Pfam" id="PF00469">
    <property type="entry name" value="F-protein"/>
    <property type="match status" value="1"/>
</dbReference>
<dbReference type="SUPFAM" id="SSF55671">
    <property type="entry name" value="Regulatory factor Nef"/>
    <property type="match status" value="1"/>
</dbReference>
<organism>
    <name type="scientific">Simian immunodeficiency virus agm.vervet (isolate AGM155)</name>
    <name type="common">SIV-agm.ver</name>
    <name type="synonym">Simian immunodeficiency virus African green monkey vervet</name>
    <dbReference type="NCBI Taxonomy" id="11727"/>
    <lineage>
        <taxon>Viruses</taxon>
        <taxon>Riboviria</taxon>
        <taxon>Pararnavirae</taxon>
        <taxon>Artverviricota</taxon>
        <taxon>Revtraviricetes</taxon>
        <taxon>Ortervirales</taxon>
        <taxon>Retroviridae</taxon>
        <taxon>Orthoretrovirinae</taxon>
        <taxon>Lentivirus</taxon>
        <taxon>Simian immunodeficiency virus</taxon>
    </lineage>
</organism>
<reference key="1">
    <citation type="journal article" date="1990" name="J. Virol.">
        <title>Simian immunodeficiency viruses from African green monkeys display unusual genetic diversity.</title>
        <authorList>
            <person name="Johnson P.R."/>
            <person name="Fomsgaard A."/>
            <person name="Allan J.S."/>
            <person name="Gravell M."/>
            <person name="London W.T."/>
            <person name="Olmstead R.A."/>
            <person name="Hirsch V.M."/>
        </authorList>
    </citation>
    <scope>NUCLEOTIDE SEQUENCE [GENOMIC RNA]</scope>
</reference>
<evidence type="ECO:0000250" key="1"/>
<evidence type="ECO:0000305" key="2"/>
<gene>
    <name type="primary">nef</name>
</gene>
<name>NEF_SIVV1</name>
<comment type="function">
    <text evidence="1">Seems to play a role in optimizing the host cell environment for viral replication without causing cell death by apoptosis. Enhances virus infectivity and pathogenicity. Probably involved in viral immune evasion mechanisms (By similarity).</text>
</comment>
<comment type="function">
    <text evidence="1">In infected CD4(+) T-lymphocytes, down-regulates cell surface expression of CD4, CD28, CD3, and MHC-I or MHC-II molecules.</text>
</comment>
<comment type="function">
    <text evidence="1">Interferes with TCR signaling from the cell membrane. Interacts with CD247/TCRZ (TCR zeta chain) and exert potent down-regulation of cell surface TCR/CD3 complexes (By similarity).</text>
</comment>
<comment type="subunit">
    <text evidence="1">Homodimer. Interacts with host CD247/TCRZ; this interaction induces down-regulation of cell surface TCR/CD3 complexes.</text>
</comment>
<comment type="subcellular location">
    <subcellularLocation>
        <location evidence="1">Host cell membrane</location>
        <topology evidence="1">Lipid-anchor</topology>
        <orientation evidence="1">Cytoplasmic side</orientation>
    </subcellularLocation>
    <text evidence="1">Associates with the inner plasma membrane through its N-terminal domain.</text>
</comment>
<comment type="domain">
    <text evidence="1">The N-terminal domain is composed of the N-myristoyl glycine and of a cluster of positively charged amino acids. It is required for inner plasma membrane targeting of Nef (By similarity).</text>
</comment>
<comment type="miscellaneous">
    <text>The 155 isolate is from a monkey imported from Kenya.</text>
</comment>
<comment type="similarity">
    <text evidence="2">Belongs to the lentivirus primate group Nef protein family.</text>
</comment>